<reference key="1">
    <citation type="journal article" date="2006" name="Mol. Phylogenet. Evol.">
        <title>Molecular systematics of Vampyressine bats (Phyllostomidae: Stenodermatinae) with comparison of direct and indirect surveys of mitochondrial DNA variation.</title>
        <authorList>
            <person name="Hoofer S.R."/>
            <person name="Baker R.J."/>
        </authorList>
    </citation>
    <scope>NUCLEOTIDE SEQUENCE [GENOMIC DNA]</scope>
</reference>
<organism>
    <name type="scientific">Vampyrodes caraccioli</name>
    <name type="common">Great stripe-faced bat</name>
    <dbReference type="NCBI Taxonomy" id="148041"/>
    <lineage>
        <taxon>Eukaryota</taxon>
        <taxon>Metazoa</taxon>
        <taxon>Chordata</taxon>
        <taxon>Craniata</taxon>
        <taxon>Vertebrata</taxon>
        <taxon>Euteleostomi</taxon>
        <taxon>Mammalia</taxon>
        <taxon>Eutheria</taxon>
        <taxon>Laurasiatheria</taxon>
        <taxon>Chiroptera</taxon>
        <taxon>Yangochiroptera</taxon>
        <taxon>Phyllostomidae</taxon>
        <taxon>Stenodermatinae</taxon>
        <taxon>Vampyrodes</taxon>
    </lineage>
</organism>
<proteinExistence type="inferred from homology"/>
<accession>Q1HV05</accession>
<feature type="chain" id="PRO_0000275143" description="NADH-ubiquinone oxidoreductase chain 4L">
    <location>
        <begin position="1"/>
        <end position="98"/>
    </location>
</feature>
<feature type="transmembrane region" description="Helical" evidence="3">
    <location>
        <begin position="1"/>
        <end position="21"/>
    </location>
</feature>
<feature type="transmembrane region" description="Helical" evidence="3">
    <location>
        <begin position="29"/>
        <end position="49"/>
    </location>
</feature>
<feature type="transmembrane region" description="Helical" evidence="3">
    <location>
        <begin position="61"/>
        <end position="81"/>
    </location>
</feature>
<protein>
    <recommendedName>
        <fullName>NADH-ubiquinone oxidoreductase chain 4L</fullName>
        <ecNumber>7.1.1.2</ecNumber>
    </recommendedName>
    <alternativeName>
        <fullName>NADH dehydrogenase subunit 4L</fullName>
    </alternativeName>
</protein>
<comment type="function">
    <text evidence="1">Core subunit of the mitochondrial membrane respiratory chain NADH dehydrogenase (Complex I) which catalyzes electron transfer from NADH through the respiratory chain, using ubiquinone as an electron acceptor. Part of the enzyme membrane arm which is embedded in the lipid bilayer and involved in proton translocation.</text>
</comment>
<comment type="catalytic activity">
    <reaction evidence="1">
        <text>a ubiquinone + NADH + 5 H(+)(in) = a ubiquinol + NAD(+) + 4 H(+)(out)</text>
        <dbReference type="Rhea" id="RHEA:29091"/>
        <dbReference type="Rhea" id="RHEA-COMP:9565"/>
        <dbReference type="Rhea" id="RHEA-COMP:9566"/>
        <dbReference type="ChEBI" id="CHEBI:15378"/>
        <dbReference type="ChEBI" id="CHEBI:16389"/>
        <dbReference type="ChEBI" id="CHEBI:17976"/>
        <dbReference type="ChEBI" id="CHEBI:57540"/>
        <dbReference type="ChEBI" id="CHEBI:57945"/>
        <dbReference type="EC" id="7.1.1.2"/>
    </reaction>
    <physiologicalReaction direction="left-to-right" evidence="1">
        <dbReference type="Rhea" id="RHEA:29092"/>
    </physiologicalReaction>
</comment>
<comment type="subunit">
    <text evidence="2">Core subunit of respiratory chain NADH dehydrogenase (Complex I) which is composed of 45 different subunits.</text>
</comment>
<comment type="subcellular location">
    <subcellularLocation>
        <location evidence="2">Mitochondrion inner membrane</location>
        <topology evidence="3">Multi-pass membrane protein</topology>
    </subcellularLocation>
</comment>
<comment type="similarity">
    <text evidence="4">Belongs to the complex I subunit 4L family.</text>
</comment>
<evidence type="ECO:0000250" key="1">
    <source>
        <dbReference type="UniProtKB" id="P03901"/>
    </source>
</evidence>
<evidence type="ECO:0000250" key="2">
    <source>
        <dbReference type="UniProtKB" id="P03902"/>
    </source>
</evidence>
<evidence type="ECO:0000255" key="3"/>
<evidence type="ECO:0000305" key="4"/>
<keyword id="KW-0249">Electron transport</keyword>
<keyword id="KW-0472">Membrane</keyword>
<keyword id="KW-0496">Mitochondrion</keyword>
<keyword id="KW-0999">Mitochondrion inner membrane</keyword>
<keyword id="KW-0520">NAD</keyword>
<keyword id="KW-0679">Respiratory chain</keyword>
<keyword id="KW-1278">Translocase</keyword>
<keyword id="KW-0812">Transmembrane</keyword>
<keyword id="KW-1133">Transmembrane helix</keyword>
<keyword id="KW-0813">Transport</keyword>
<keyword id="KW-0830">Ubiquinone</keyword>
<gene>
    <name type="primary">MT-ND4L</name>
    <name type="synonym">MTND4L</name>
    <name type="synonym">NADH4L</name>
    <name type="synonym">ND4L</name>
</gene>
<name>NU4LM_VAMCA</name>
<geneLocation type="mitochondrion"/>
<dbReference type="EC" id="7.1.1.2"/>
<dbReference type="EMBL" id="DQ312380">
    <property type="protein sequence ID" value="ABC47556.1"/>
    <property type="molecule type" value="Genomic_DNA"/>
</dbReference>
<dbReference type="EMBL" id="DQ312379">
    <property type="protein sequence ID" value="ABC47553.1"/>
    <property type="molecule type" value="Genomic_DNA"/>
</dbReference>
<dbReference type="SMR" id="Q1HV05"/>
<dbReference type="GO" id="GO:0005743">
    <property type="term" value="C:mitochondrial inner membrane"/>
    <property type="evidence" value="ECO:0000250"/>
    <property type="project" value="UniProtKB"/>
</dbReference>
<dbReference type="GO" id="GO:0045271">
    <property type="term" value="C:respiratory chain complex I"/>
    <property type="evidence" value="ECO:0000250"/>
    <property type="project" value="UniProtKB"/>
</dbReference>
<dbReference type="GO" id="GO:0008137">
    <property type="term" value="F:NADH dehydrogenase (ubiquinone) activity"/>
    <property type="evidence" value="ECO:0000250"/>
    <property type="project" value="UniProtKB"/>
</dbReference>
<dbReference type="GO" id="GO:0042773">
    <property type="term" value="P:ATP synthesis coupled electron transport"/>
    <property type="evidence" value="ECO:0007669"/>
    <property type="project" value="InterPro"/>
</dbReference>
<dbReference type="FunFam" id="1.10.287.3510:FF:000002">
    <property type="entry name" value="NADH-ubiquinone oxidoreductase chain 4L"/>
    <property type="match status" value="1"/>
</dbReference>
<dbReference type="Gene3D" id="1.10.287.3510">
    <property type="match status" value="1"/>
</dbReference>
<dbReference type="InterPro" id="IPR001133">
    <property type="entry name" value="NADH_UbQ_OxRdtase_chain4L/K"/>
</dbReference>
<dbReference type="InterPro" id="IPR039428">
    <property type="entry name" value="NUOK/Mnh_C1-like"/>
</dbReference>
<dbReference type="PANTHER" id="PTHR11434:SF0">
    <property type="entry name" value="NADH-UBIQUINONE OXIDOREDUCTASE CHAIN 4L"/>
    <property type="match status" value="1"/>
</dbReference>
<dbReference type="PANTHER" id="PTHR11434">
    <property type="entry name" value="NADH-UBIQUINONE OXIDOREDUCTASE SUBUNIT ND4L"/>
    <property type="match status" value="1"/>
</dbReference>
<dbReference type="Pfam" id="PF00420">
    <property type="entry name" value="Oxidored_q2"/>
    <property type="match status" value="1"/>
</dbReference>
<sequence length="98" mass="10930">MSLTYMNMFMAFTISLLGLLLYRSHMMSSLLCLEGMMLSLFVMMTMTILNTHLTLASMIPIILLVFAACEAALGLSLLVMVSTTYGMDYVQNLNLLQC</sequence>